<dbReference type="EMBL" id="AF191796">
    <property type="protein sequence ID" value="AAQ13749.1"/>
    <property type="molecule type" value="Genomic_DNA"/>
</dbReference>
<dbReference type="RefSeq" id="YP_529541.1">
    <property type="nucleotide sequence ID" value="NC_007914.1"/>
</dbReference>
<dbReference type="KEGG" id="vg:5142398"/>
<dbReference type="Proteomes" id="UP000007024">
    <property type="component" value="Segment"/>
</dbReference>
<organismHost>
    <name type="scientific">Haloarcula hispanica</name>
    <dbReference type="NCBI Taxonomy" id="51589"/>
</organismHost>
<gene>
    <name type="ORF">ORF29</name>
</gene>
<proteinExistence type="predicted"/>
<protein>
    <recommendedName>
        <fullName>Uncharacterized protein ORF29</fullName>
    </recommendedName>
</protein>
<name>Y029_HIS1I</name>
<sequence>MSEEYLQSDLARAIETHSIESVENLNKSETVFYICDVLGVEPPEAHPSEHNGTVPRSLSQEWAKILAEEAEENSEENNDESEEDN</sequence>
<keyword id="KW-1185">Reference proteome</keyword>
<organism>
    <name type="scientific">His1 virus (isolate Australia/Victoria)</name>
    <name type="common">His1V</name>
    <name type="synonym">Haloarcula hispanica virus 1</name>
    <dbReference type="NCBI Taxonomy" id="654912"/>
    <lineage>
        <taxon>Viruses</taxon>
        <taxon>Viruses incertae sedis</taxon>
        <taxon>Halspiviridae</taxon>
        <taxon>Salterprovirus</taxon>
        <taxon>Salterprovirus His1</taxon>
    </lineage>
</organism>
<reference key="1">
    <citation type="journal article" date="2006" name="Virology">
        <title>His1 and His2 are distantly related, spindle-shaped haloviruses belonging to the novel virus group, Salterprovirus.</title>
        <authorList>
            <person name="Bath C."/>
            <person name="Cukalac T."/>
            <person name="Porter K."/>
            <person name="Dyall-Smith M.L."/>
        </authorList>
    </citation>
    <scope>NUCLEOTIDE SEQUENCE [GENOMIC DNA]</scope>
</reference>
<evidence type="ECO:0000256" key="1">
    <source>
        <dbReference type="SAM" id="MobiDB-lite"/>
    </source>
</evidence>
<feature type="chain" id="PRO_0000384897" description="Uncharacterized protein ORF29">
    <location>
        <begin position="1"/>
        <end position="85"/>
    </location>
</feature>
<feature type="region of interest" description="Disordered" evidence="1">
    <location>
        <begin position="44"/>
        <end position="85"/>
    </location>
</feature>
<feature type="compositionally biased region" description="Polar residues" evidence="1">
    <location>
        <begin position="50"/>
        <end position="60"/>
    </location>
</feature>
<feature type="compositionally biased region" description="Acidic residues" evidence="1">
    <location>
        <begin position="68"/>
        <end position="85"/>
    </location>
</feature>
<accession>Q25BG6</accession>